<comment type="function">
    <text evidence="2 5">Catalyzes, at least in vitro, the hydrolysis of sphingomyelin to form ceramide and phosphocholine (PubMed:9520418). Also hydrolyzes 1-O-alkyl-2-lyso-sn-glycero-3-phosphocholine (lyso-platelet-activating factor) in vivo (By similarity). Also acts on 1-acyl-2-lyso-sn-glycero-3-phosphocholine (lyso-PC) and sphingosylphosphocholine (By similarity).</text>
</comment>
<comment type="catalytic activity">
    <reaction evidence="4 5">
        <text>a sphingomyelin + H2O = phosphocholine + an N-acylsphing-4-enine + H(+)</text>
        <dbReference type="Rhea" id="RHEA:19253"/>
        <dbReference type="ChEBI" id="CHEBI:15377"/>
        <dbReference type="ChEBI" id="CHEBI:15378"/>
        <dbReference type="ChEBI" id="CHEBI:17636"/>
        <dbReference type="ChEBI" id="CHEBI:52639"/>
        <dbReference type="ChEBI" id="CHEBI:295975"/>
        <dbReference type="EC" id="3.1.4.12"/>
    </reaction>
    <physiologicalReaction direction="left-to-right" evidence="8">
        <dbReference type="Rhea" id="RHEA:19254"/>
    </physiologicalReaction>
</comment>
<comment type="catalytic activity">
    <reaction evidence="2">
        <text>an N-(acyl)-sphingosylphosphocholine + H2O = an N-acyl-sphingoid base + phosphocholine + H(+)</text>
        <dbReference type="Rhea" id="RHEA:45300"/>
        <dbReference type="ChEBI" id="CHEBI:15377"/>
        <dbReference type="ChEBI" id="CHEBI:15378"/>
        <dbReference type="ChEBI" id="CHEBI:64583"/>
        <dbReference type="ChEBI" id="CHEBI:83273"/>
        <dbReference type="ChEBI" id="CHEBI:295975"/>
    </reaction>
    <physiologicalReaction direction="left-to-right" evidence="2">
        <dbReference type="Rhea" id="RHEA:45301"/>
    </physiologicalReaction>
</comment>
<comment type="catalytic activity">
    <reaction evidence="2">
        <text>1-O-octadecyl-sn-glycero-3-phosphocholine + H2O = 1-O-octadecyl-sn-glycerol + phosphocholine + H(+)</text>
        <dbReference type="Rhea" id="RHEA:39923"/>
        <dbReference type="ChEBI" id="CHEBI:15377"/>
        <dbReference type="ChEBI" id="CHEBI:15378"/>
        <dbReference type="ChEBI" id="CHEBI:74001"/>
        <dbReference type="ChEBI" id="CHEBI:75216"/>
        <dbReference type="ChEBI" id="CHEBI:295975"/>
    </reaction>
    <physiologicalReaction direction="left-to-right" evidence="2">
        <dbReference type="Rhea" id="RHEA:39924"/>
    </physiologicalReaction>
</comment>
<comment type="catalytic activity">
    <reaction evidence="2">
        <text>1-hexadecanoyl-sn-glycero-3-phosphocholine + H2O = 1-hexadecanoyl-sn-glycerol + phosphocholine + H(+)</text>
        <dbReference type="Rhea" id="RHEA:41119"/>
        <dbReference type="ChEBI" id="CHEBI:15377"/>
        <dbReference type="ChEBI" id="CHEBI:15378"/>
        <dbReference type="ChEBI" id="CHEBI:72998"/>
        <dbReference type="ChEBI" id="CHEBI:75542"/>
        <dbReference type="ChEBI" id="CHEBI:295975"/>
    </reaction>
    <physiologicalReaction direction="left-to-right" evidence="2">
        <dbReference type="Rhea" id="RHEA:41120"/>
    </physiologicalReaction>
</comment>
<comment type="catalytic activity">
    <reaction evidence="2">
        <text>a sphingosylphosphocholine + H2O = a sphingoid base + phosphocholine + H(+)</text>
        <dbReference type="Rhea" id="RHEA:45296"/>
        <dbReference type="ChEBI" id="CHEBI:15377"/>
        <dbReference type="ChEBI" id="CHEBI:15378"/>
        <dbReference type="ChEBI" id="CHEBI:84410"/>
        <dbReference type="ChEBI" id="CHEBI:85171"/>
        <dbReference type="ChEBI" id="CHEBI:295975"/>
    </reaction>
    <physiologicalReaction direction="left-to-right" evidence="2">
        <dbReference type="Rhea" id="RHEA:45297"/>
    </physiologicalReaction>
</comment>
<comment type="catalytic activity">
    <reaction evidence="2">
        <text>1-O-hexadecyl-sn-glycero-3-phosphocholine + H2O = 1-O-hexadecyl-sn-glycerol + phosphocholine + H(+)</text>
        <dbReference type="Rhea" id="RHEA:36087"/>
        <dbReference type="ChEBI" id="CHEBI:15377"/>
        <dbReference type="ChEBI" id="CHEBI:15378"/>
        <dbReference type="ChEBI" id="CHEBI:34115"/>
        <dbReference type="ChEBI" id="CHEBI:64496"/>
        <dbReference type="ChEBI" id="CHEBI:295975"/>
    </reaction>
    <physiologicalReaction direction="left-to-right" evidence="2">
        <dbReference type="Rhea" id="RHEA:36088"/>
    </physiologicalReaction>
</comment>
<comment type="cofactor">
    <cofactor evidence="5">
        <name>Mg(2+)</name>
        <dbReference type="ChEBI" id="CHEBI:18420"/>
    </cofactor>
</comment>
<comment type="activity regulation">
    <text evidence="4 5">Activated by arachidonic acid.</text>
</comment>
<comment type="biophysicochemical properties">
    <kinetics>
        <KM evidence="5">15 uM for sphingomyelin (at pH 7.4 and 37 degrees Celsius)</KM>
        <Vmax evidence="5">10.0 umol/h/mg enzyme with sphingomyelin as substrate (at pH 7.4 and 37 degrees Celsius)</Vmax>
    </kinetics>
    <phDependence>
        <text evidence="5">Optimum pH is 6.5-7.5.</text>
    </phDependence>
</comment>
<comment type="pathway">
    <text evidence="5">Lipid metabolism; sphingolipid metabolism.</text>
</comment>
<comment type="subcellular location">
    <subcellularLocation>
        <location evidence="5">Cell membrane</location>
        <topology evidence="3">Multi-pass membrane protein</topology>
    </subcellularLocation>
</comment>
<comment type="tissue specificity">
    <text evidence="5">Although widely expressed in all tissues examined, except the spleen, high enzymatic activity occurs only in the brain.</text>
</comment>
<comment type="disruption phenotype">
    <text evidence="4">Mice lacking Smpd2 and Smpd3 are completely devoid of neutral SMase activity but do not developed sphingomyelin storage abnormalities.</text>
</comment>
<comment type="similarity">
    <text evidence="7">Belongs to the neutral sphingomyelinase family.</text>
</comment>
<reference key="1">
    <citation type="journal article" date="1998" name="Proc. Natl. Acad. Sci. U.S.A.">
        <title>Cloned mammalian neutral sphingomyelinase: functions in sphingolipid signaling?</title>
        <authorList>
            <person name="Tomiuk S."/>
            <person name="Hofmann K."/>
            <person name="Nix M."/>
            <person name="Zumbansen M."/>
            <person name="Stoffel W."/>
        </authorList>
    </citation>
    <scope>NUCLEOTIDE SEQUENCE [MRNA]</scope>
    <scope>FUNCTION</scope>
    <scope>CATALYTIC ACTIVITY</scope>
    <scope>COFACTOR</scope>
    <scope>ACTIVITY REGULATION</scope>
    <scope>BIOPHYSICOCHEMICAL PROPERTIES</scope>
    <scope>PATHWAY</scope>
    <scope>ALTERNATIVE SPLICING</scope>
    <scope>SUBCELLULAR LOCATION</scope>
    <scope>TISSUE SPECIFICITY</scope>
</reference>
<reference key="2">
    <citation type="journal article" date="2004" name="Genome Res.">
        <title>The status, quality, and expansion of the NIH full-length cDNA project: the Mammalian Gene Collection (MGC).</title>
        <authorList>
            <consortium name="The MGC Project Team"/>
        </authorList>
    </citation>
    <scope>NUCLEOTIDE SEQUENCE [LARGE SCALE MRNA]</scope>
    <source>
        <tissue>Salivary gland</tissue>
    </source>
</reference>
<reference key="3">
    <citation type="journal article" date="2005" name="Proc. Natl. Acad. Sci. U.S.A.">
        <title>Neutral sphingomyelinase 2 (smpd3) in the control of postnatal growth and development.</title>
        <authorList>
            <person name="Stoffel W."/>
            <person name="Jenke B."/>
            <person name="Bloeck B."/>
            <person name="Zumbansen M."/>
            <person name="Koebke J."/>
        </authorList>
    </citation>
    <scope>FUNCTION</scope>
    <scope>CATALYTIC ACTIVITY</scope>
    <scope>PATHWAY</scope>
    <scope>DISRUPTION PHENOTYPE</scope>
</reference>
<reference key="4">
    <citation type="journal article" date="2010" name="Cell">
        <title>A tissue-specific atlas of mouse protein phosphorylation and expression.</title>
        <authorList>
            <person name="Huttlin E.L."/>
            <person name="Jedrychowski M.P."/>
            <person name="Elias J.E."/>
            <person name="Goswami T."/>
            <person name="Rad R."/>
            <person name="Beausoleil S.A."/>
            <person name="Villen J."/>
            <person name="Haas W."/>
            <person name="Sowa M.E."/>
            <person name="Gygi S.P."/>
        </authorList>
    </citation>
    <scope>IDENTIFICATION BY MASS SPECTROMETRY [LARGE SCALE ANALYSIS]</scope>
    <source>
        <tissue>Heart</tissue>
        <tissue>Kidney</tissue>
        <tissue>Liver</tissue>
        <tissue>Lung</tissue>
        <tissue>Pancreas</tissue>
    </source>
</reference>
<evidence type="ECO:0000250" key="1"/>
<evidence type="ECO:0000250" key="2">
    <source>
        <dbReference type="UniProtKB" id="O60906"/>
    </source>
</evidence>
<evidence type="ECO:0000255" key="3"/>
<evidence type="ECO:0000269" key="4">
    <source>
    </source>
</evidence>
<evidence type="ECO:0000269" key="5">
    <source>
    </source>
</evidence>
<evidence type="ECO:0000303" key="6">
    <source>
    </source>
</evidence>
<evidence type="ECO:0000305" key="7"/>
<evidence type="ECO:0000305" key="8">
    <source>
    </source>
</evidence>
<evidence type="ECO:0000305" key="9">
    <source>
    </source>
</evidence>
<evidence type="ECO:0000312" key="10">
    <source>
        <dbReference type="MGI" id="MGI:1278330"/>
    </source>
</evidence>
<keyword id="KW-1003">Cell membrane</keyword>
<keyword id="KW-0378">Hydrolase</keyword>
<keyword id="KW-0443">Lipid metabolism</keyword>
<keyword id="KW-0460">Magnesium</keyword>
<keyword id="KW-0472">Membrane</keyword>
<keyword id="KW-0479">Metal-binding</keyword>
<keyword id="KW-1185">Reference proteome</keyword>
<keyword id="KW-0746">Sphingolipid metabolism</keyword>
<keyword id="KW-0812">Transmembrane</keyword>
<keyword id="KW-1133">Transmembrane helix</keyword>
<sequence>MKLNFSLRLRVFNLNCWDIPYLSKHRADRMKRLGDFLNLENFDLALLEEVWSEQDFQYLRQRLSLTYPDAHYFRSGMIGSGLCVFSKHPIQEIFQHVYSLNGYPYMFHHGDWFCGKSVGLLVLRLSGLVLNAYVTHLHAEYSRQKDIYFAHRVAQAWELAQFIHHTSKNADVVLLCGDLNMHPKDLGCCLLKEWTGLHDAFVETEDFKGSDDGCTMVPKNCYVSQQDLGPFPSGIRIDYVLYKAVSEFHVCCETLKTTTGCDPHSDKPFSDHEALMATLYVKHSPPQEDPCTACGPLERSDLISVLREARTELGLGIAKARWWAAFSGYVIVWGLSLLVLLCVLAAGEEAREVAIILCIPSVGLVLVAGAVYLFHKQEAKGLCRAQAEMLHVLTRETETQDRGSEPHLAYCLQQEGDRA</sequence>
<feature type="chain" id="PRO_0000075687" description="Sphingomyelin phosphodiesterase 2">
    <location>
        <begin position="1"/>
        <end position="419"/>
    </location>
</feature>
<feature type="transmembrane region" description="Helical" evidence="3">
    <location>
        <begin position="326"/>
        <end position="346"/>
    </location>
</feature>
<feature type="transmembrane region" description="Helical" evidence="3">
    <location>
        <begin position="354"/>
        <end position="374"/>
    </location>
</feature>
<feature type="active site" description="Proton acceptor" evidence="1">
    <location>
        <position position="272"/>
    </location>
</feature>
<feature type="binding site" evidence="1">
    <location>
        <position position="49"/>
    </location>
    <ligand>
        <name>Mg(2+)</name>
        <dbReference type="ChEBI" id="CHEBI:18420"/>
    </ligand>
</feature>
<feature type="site" description="Important for substrate recognition" evidence="1">
    <location>
        <position position="180"/>
    </location>
</feature>
<protein>
    <recommendedName>
        <fullName evidence="9">Sphingomyelin phosphodiesterase 2</fullName>
        <ecNumber evidence="4 5">3.1.4.12</ecNumber>
    </recommendedName>
    <alternativeName>
        <fullName>Lyso-platelet-activating factor-phospholipase C</fullName>
        <shortName>Lyso-PAF-PLC</shortName>
    </alternativeName>
    <alternativeName>
        <fullName evidence="6">Neutral sphingomyelinase</fullName>
        <shortName evidence="6">N-SMase</shortName>
        <shortName evidence="6">nSMase</shortName>
    </alternativeName>
</protein>
<gene>
    <name evidence="10" type="primary">Smpd2</name>
</gene>
<organism>
    <name type="scientific">Mus musculus</name>
    <name type="common">Mouse</name>
    <dbReference type="NCBI Taxonomy" id="10090"/>
    <lineage>
        <taxon>Eukaryota</taxon>
        <taxon>Metazoa</taxon>
        <taxon>Chordata</taxon>
        <taxon>Craniata</taxon>
        <taxon>Vertebrata</taxon>
        <taxon>Euteleostomi</taxon>
        <taxon>Mammalia</taxon>
        <taxon>Eutheria</taxon>
        <taxon>Euarchontoglires</taxon>
        <taxon>Glires</taxon>
        <taxon>Rodentia</taxon>
        <taxon>Myomorpha</taxon>
        <taxon>Muroidea</taxon>
        <taxon>Muridae</taxon>
        <taxon>Murinae</taxon>
        <taxon>Mus</taxon>
        <taxon>Mus</taxon>
    </lineage>
</organism>
<accession>O70572</accession>
<proteinExistence type="evidence at protein level"/>
<name>NSMA_MOUSE</name>
<dbReference type="EC" id="3.1.4.12" evidence="4 5"/>
<dbReference type="EMBL" id="AJ222800">
    <property type="protein sequence ID" value="CAA10994.1"/>
    <property type="molecule type" value="mRNA"/>
</dbReference>
<dbReference type="EMBL" id="BC010978">
    <property type="protein sequence ID" value="AAH10978.1"/>
    <property type="molecule type" value="mRNA"/>
</dbReference>
<dbReference type="CCDS" id="CCDS23805.1"/>
<dbReference type="RefSeq" id="NP_033239.1">
    <property type="nucleotide sequence ID" value="NM_009213.3"/>
</dbReference>
<dbReference type="SMR" id="O70572"/>
<dbReference type="BioGRID" id="203346">
    <property type="interactions" value="4"/>
</dbReference>
<dbReference type="FunCoup" id="O70572">
    <property type="interactions" value="871"/>
</dbReference>
<dbReference type="STRING" id="10090.ENSMUSP00000019965"/>
<dbReference type="BindingDB" id="O70572"/>
<dbReference type="ChEMBL" id="CHEMBL5291605"/>
<dbReference type="iPTMnet" id="O70572"/>
<dbReference type="PhosphoSitePlus" id="O70572"/>
<dbReference type="SwissPalm" id="O70572"/>
<dbReference type="jPOST" id="O70572"/>
<dbReference type="PaxDb" id="10090-ENSMUSP00000019965"/>
<dbReference type="PeptideAtlas" id="O70572"/>
<dbReference type="ProteomicsDB" id="295531"/>
<dbReference type="Pumba" id="O70572"/>
<dbReference type="Antibodypedia" id="19179">
    <property type="antibodies" value="208 antibodies from 30 providers"/>
</dbReference>
<dbReference type="DNASU" id="20598"/>
<dbReference type="Ensembl" id="ENSMUST00000019965.13">
    <property type="protein sequence ID" value="ENSMUSP00000019965.7"/>
    <property type="gene ID" value="ENSMUSG00000019822.13"/>
</dbReference>
<dbReference type="GeneID" id="20598"/>
<dbReference type="KEGG" id="mmu:20598"/>
<dbReference type="UCSC" id="uc007exs.1">
    <property type="organism name" value="mouse"/>
</dbReference>
<dbReference type="AGR" id="MGI:1278330"/>
<dbReference type="CTD" id="6610"/>
<dbReference type="MGI" id="MGI:1278330">
    <property type="gene designation" value="Smpd2"/>
</dbReference>
<dbReference type="VEuPathDB" id="HostDB:ENSMUSG00000019822"/>
<dbReference type="eggNOG" id="KOG3873">
    <property type="taxonomic scope" value="Eukaryota"/>
</dbReference>
<dbReference type="GeneTree" id="ENSGT00390000009166"/>
<dbReference type="HOGENOM" id="CLU_034001_4_0_1"/>
<dbReference type="InParanoid" id="O70572"/>
<dbReference type="OMA" id="LWTPNVG"/>
<dbReference type="OrthoDB" id="387657at2759"/>
<dbReference type="PhylomeDB" id="O70572"/>
<dbReference type="TreeFam" id="TF313899"/>
<dbReference type="Reactome" id="R-MMU-5626978">
    <property type="pathway name" value="TNFR1-mediated ceramide production"/>
</dbReference>
<dbReference type="Reactome" id="R-MMU-9840310">
    <property type="pathway name" value="Glycosphingolipid catabolism"/>
</dbReference>
<dbReference type="UniPathway" id="UPA00222"/>
<dbReference type="BioGRID-ORCS" id="20598">
    <property type="hits" value="3 hits in 78 CRISPR screens"/>
</dbReference>
<dbReference type="ChiTaRS" id="Smpd2">
    <property type="organism name" value="mouse"/>
</dbReference>
<dbReference type="PRO" id="PR:O70572"/>
<dbReference type="Proteomes" id="UP000000589">
    <property type="component" value="Chromosome 10"/>
</dbReference>
<dbReference type="RNAct" id="O70572">
    <property type="molecule type" value="protein"/>
</dbReference>
<dbReference type="Bgee" id="ENSMUSG00000019822">
    <property type="expression patterns" value="Expressed in right kidney and 266 other cell types or tissues"/>
</dbReference>
<dbReference type="ExpressionAtlas" id="O70572">
    <property type="expression patterns" value="baseline and differential"/>
</dbReference>
<dbReference type="GO" id="GO:0005901">
    <property type="term" value="C:caveola"/>
    <property type="evidence" value="ECO:0007669"/>
    <property type="project" value="Ensembl"/>
</dbReference>
<dbReference type="GO" id="GO:0005886">
    <property type="term" value="C:plasma membrane"/>
    <property type="evidence" value="ECO:0000314"/>
    <property type="project" value="UniProtKB"/>
</dbReference>
<dbReference type="GO" id="GO:0046872">
    <property type="term" value="F:metal ion binding"/>
    <property type="evidence" value="ECO:0007669"/>
    <property type="project" value="UniProtKB-KW"/>
</dbReference>
<dbReference type="GO" id="GO:0004767">
    <property type="term" value="F:sphingomyelin phosphodiesterase activity"/>
    <property type="evidence" value="ECO:0000314"/>
    <property type="project" value="UniProtKB"/>
</dbReference>
<dbReference type="GO" id="GO:0046513">
    <property type="term" value="P:ceramide biosynthetic process"/>
    <property type="evidence" value="ECO:0007669"/>
    <property type="project" value="Ensembl"/>
</dbReference>
<dbReference type="GO" id="GO:0006672">
    <property type="term" value="P:ceramide metabolic process"/>
    <property type="evidence" value="ECO:0000314"/>
    <property type="project" value="MGI"/>
</dbReference>
<dbReference type="GO" id="GO:0035556">
    <property type="term" value="P:intracellular signal transduction"/>
    <property type="evidence" value="ECO:0007669"/>
    <property type="project" value="Ensembl"/>
</dbReference>
<dbReference type="GO" id="GO:0043065">
    <property type="term" value="P:positive regulation of apoptotic process"/>
    <property type="evidence" value="ECO:0000266"/>
    <property type="project" value="MGI"/>
</dbReference>
<dbReference type="GO" id="GO:0009612">
    <property type="term" value="P:response to mechanical stimulus"/>
    <property type="evidence" value="ECO:0007669"/>
    <property type="project" value="Ensembl"/>
</dbReference>
<dbReference type="GO" id="GO:0006685">
    <property type="term" value="P:sphingomyelin catabolic process"/>
    <property type="evidence" value="ECO:0000314"/>
    <property type="project" value="UniProtKB"/>
</dbReference>
<dbReference type="FunFam" id="3.60.10.10:FF:000033">
    <property type="entry name" value="sphingomyelin phosphodiesterase 2"/>
    <property type="match status" value="1"/>
</dbReference>
<dbReference type="Gene3D" id="3.60.10.10">
    <property type="entry name" value="Endonuclease/exonuclease/phosphatase"/>
    <property type="match status" value="1"/>
</dbReference>
<dbReference type="InterPro" id="IPR036691">
    <property type="entry name" value="Endo/exonu/phosph_ase_sf"/>
</dbReference>
<dbReference type="InterPro" id="IPR005135">
    <property type="entry name" value="Endo/exonuclease/phosphatase"/>
</dbReference>
<dbReference type="InterPro" id="IPR038772">
    <property type="entry name" value="Sph/SMPD2-like"/>
</dbReference>
<dbReference type="PANTHER" id="PTHR16320:SF24">
    <property type="entry name" value="PHOSPHODIESTERASE, PUTATIVE-RELATED"/>
    <property type="match status" value="1"/>
</dbReference>
<dbReference type="PANTHER" id="PTHR16320">
    <property type="entry name" value="SPHINGOMYELINASE FAMILY MEMBER"/>
    <property type="match status" value="1"/>
</dbReference>
<dbReference type="Pfam" id="PF03372">
    <property type="entry name" value="Exo_endo_phos"/>
    <property type="match status" value="1"/>
</dbReference>
<dbReference type="SUPFAM" id="SSF56219">
    <property type="entry name" value="DNase I-like"/>
    <property type="match status" value="1"/>
</dbReference>